<dbReference type="EC" id="4.1.3.27"/>
<dbReference type="EC" id="4.1.1.48"/>
<dbReference type="EMBL" id="X02425">
    <property type="protein sequence ID" value="CAA26280.1"/>
    <property type="status" value="ALT_SEQ"/>
    <property type="molecule type" value="Genomic_DNA"/>
</dbReference>
<dbReference type="SMR" id="P09575"/>
<dbReference type="MEROPS" id="C26.959"/>
<dbReference type="UniPathway" id="UPA00035">
    <property type="reaction ID" value="UER00040"/>
</dbReference>
<dbReference type="UniPathway" id="UPA00035">
    <property type="reaction ID" value="UER00043"/>
</dbReference>
<dbReference type="GO" id="GO:0005829">
    <property type="term" value="C:cytosol"/>
    <property type="evidence" value="ECO:0007669"/>
    <property type="project" value="TreeGrafter"/>
</dbReference>
<dbReference type="GO" id="GO:0004049">
    <property type="term" value="F:anthranilate synthase activity"/>
    <property type="evidence" value="ECO:0007669"/>
    <property type="project" value="UniProtKB-EC"/>
</dbReference>
<dbReference type="GO" id="GO:0004425">
    <property type="term" value="F:indole-3-glycerol-phosphate synthase activity"/>
    <property type="evidence" value="ECO:0007669"/>
    <property type="project" value="UniProtKB-EC"/>
</dbReference>
<dbReference type="GO" id="GO:0000162">
    <property type="term" value="P:L-tryptophan biosynthetic process"/>
    <property type="evidence" value="ECO:0007669"/>
    <property type="project" value="UniProtKB-UniPathway"/>
</dbReference>
<dbReference type="CDD" id="cd01743">
    <property type="entry name" value="GATase1_Anthranilate_Synthase"/>
    <property type="match status" value="1"/>
</dbReference>
<dbReference type="FunFam" id="3.40.50.880:FF:000031">
    <property type="entry name" value="Multifunctional tryptophan biosynthesis protein"/>
    <property type="match status" value="1"/>
</dbReference>
<dbReference type="Gene3D" id="3.40.50.880">
    <property type="match status" value="1"/>
</dbReference>
<dbReference type="Gene3D" id="3.20.20.70">
    <property type="entry name" value="Aldolase class I"/>
    <property type="match status" value="1"/>
</dbReference>
<dbReference type="InterPro" id="IPR013785">
    <property type="entry name" value="Aldolase_TIM"/>
</dbReference>
<dbReference type="InterPro" id="IPR050472">
    <property type="entry name" value="Anth_synth/Amidotransfase"/>
</dbReference>
<dbReference type="InterPro" id="IPR029062">
    <property type="entry name" value="Class_I_gatase-like"/>
</dbReference>
<dbReference type="InterPro" id="IPR017926">
    <property type="entry name" value="GATASE"/>
</dbReference>
<dbReference type="InterPro" id="IPR013798">
    <property type="entry name" value="Indole-3-glycerol_P_synth_dom"/>
</dbReference>
<dbReference type="InterPro" id="IPR001468">
    <property type="entry name" value="Indole-3-GlycerolPSynthase_CS"/>
</dbReference>
<dbReference type="InterPro" id="IPR011060">
    <property type="entry name" value="RibuloseP-bd_barrel"/>
</dbReference>
<dbReference type="InterPro" id="IPR006221">
    <property type="entry name" value="TrpG/PapA_dom"/>
</dbReference>
<dbReference type="NCBIfam" id="TIGR00566">
    <property type="entry name" value="trpG_papA"/>
    <property type="match status" value="1"/>
</dbReference>
<dbReference type="PANTHER" id="PTHR43418:SF4">
    <property type="entry name" value="MULTIFUNCTIONAL TRYPTOPHAN BIOSYNTHESIS PROTEIN"/>
    <property type="match status" value="1"/>
</dbReference>
<dbReference type="PANTHER" id="PTHR43418">
    <property type="entry name" value="MULTIFUNCTIONAL TRYPTOPHAN BIOSYNTHESIS PROTEIN-RELATED"/>
    <property type="match status" value="1"/>
</dbReference>
<dbReference type="Pfam" id="PF00117">
    <property type="entry name" value="GATase"/>
    <property type="match status" value="1"/>
</dbReference>
<dbReference type="Pfam" id="PF00218">
    <property type="entry name" value="IGPS"/>
    <property type="match status" value="1"/>
</dbReference>
<dbReference type="PRINTS" id="PR00097">
    <property type="entry name" value="ANTSNTHASEII"/>
</dbReference>
<dbReference type="PRINTS" id="PR00099">
    <property type="entry name" value="CPSGATASE"/>
</dbReference>
<dbReference type="PRINTS" id="PR00096">
    <property type="entry name" value="GATASE"/>
</dbReference>
<dbReference type="SUPFAM" id="SSF52317">
    <property type="entry name" value="Class I glutamine amidotransferase-like"/>
    <property type="match status" value="1"/>
</dbReference>
<dbReference type="SUPFAM" id="SSF51366">
    <property type="entry name" value="Ribulose-phoshate binding barrel"/>
    <property type="match status" value="1"/>
</dbReference>
<dbReference type="PROSITE" id="PS51273">
    <property type="entry name" value="GATASE_TYPE_1"/>
    <property type="match status" value="1"/>
</dbReference>
<dbReference type="PROSITE" id="PS00614">
    <property type="entry name" value="IGPS"/>
    <property type="match status" value="1"/>
</dbReference>
<evidence type="ECO:0000250" key="1">
    <source>
        <dbReference type="UniProtKB" id="P00900"/>
    </source>
</evidence>
<evidence type="ECO:0000255" key="2">
    <source>
        <dbReference type="PROSITE-ProRule" id="PRU00605"/>
    </source>
</evidence>
<protein>
    <recommendedName>
        <fullName>Multifunctional tryptophan biosynthesis protein</fullName>
    </recommendedName>
    <domain>
        <recommendedName>
            <fullName>Anthranilate synthase component 2</fullName>
            <shortName>AS</shortName>
            <ecNumber>4.1.3.27</ecNumber>
        </recommendedName>
        <alternativeName>
            <fullName>Anthranilate synthase, glutamine amidotransferase component</fullName>
        </alternativeName>
    </domain>
    <domain>
        <recommendedName>
            <fullName>Indole-3-glycerol phosphate synthase</fullName>
            <ecNumber>4.1.1.48</ecNumber>
        </recommendedName>
        <alternativeName>
            <fullName>PRAI</fullName>
        </alternativeName>
    </domain>
</protein>
<reference key="1">
    <citation type="journal article" date="1985" name="Nucleic Acids Res.">
        <title>Molecular cloning and characterization of a gene coding for methanol oxidase in Hansenula polymorpha.</title>
        <authorList>
            <person name="Ledeboer A.M."/>
            <person name="Edens L."/>
            <person name="Maat J."/>
            <person name="Visser C."/>
            <person name="Bos J.W."/>
            <person name="Verrips C.T."/>
        </authorList>
    </citation>
    <scope>NUCLEOTIDE SEQUENCE [GENOMIC DNA]</scope>
    <source>
        <strain>ATCC 34438 / CBS 4732 / DSM 70277 / JCM 3621 / NBRC 1476 / NRRL Y-5445</strain>
    </source>
</reference>
<reference key="2">
    <citation type="journal article" date="1988" name="Nucleic Acids Res.">
        <title>Anthranilate synthase component II from Hansenula polymorpha.</title>
        <authorList>
            <person name="Reid G.A."/>
        </authorList>
    </citation>
    <scope>IDENTIFICATION OF CODING REGION</scope>
</reference>
<name>TRPG_PICAN</name>
<keyword id="KW-0028">Amino-acid biosynthesis</keyword>
<keyword id="KW-0057">Aromatic amino acid biosynthesis</keyword>
<keyword id="KW-0315">Glutamine amidotransferase</keyword>
<keyword id="KW-0456">Lyase</keyword>
<keyword id="KW-0511">Multifunctional enzyme</keyword>
<keyword id="KW-0822">Tryptophan biosynthesis</keyword>
<organism>
    <name type="scientific">Pichia angusta</name>
    <name type="common">Yeast</name>
    <name type="synonym">Hansenula polymorpha</name>
    <dbReference type="NCBI Taxonomy" id="870730"/>
    <lineage>
        <taxon>Eukaryota</taxon>
        <taxon>Fungi</taxon>
        <taxon>Dikarya</taxon>
        <taxon>Ascomycota</taxon>
        <taxon>Saccharomycotina</taxon>
        <taxon>Pichiomycetes</taxon>
        <taxon>Pichiales</taxon>
        <taxon>Pichiaceae</taxon>
        <taxon>Ogataea</taxon>
    </lineage>
</organism>
<proteinExistence type="predicted"/>
<accession>P09575</accession>
<feature type="chain" id="PRO_0000056860" description="Multifunctional tryptophan biosynthesis protein">
    <location>
        <begin position="1"/>
        <end position="367" status="greater than"/>
    </location>
</feature>
<feature type="domain" description="Glutamine amidotransferase type-1" evidence="2">
    <location>
        <begin position="7"/>
        <end position="201"/>
    </location>
</feature>
<feature type="region of interest" description="Indole-3-glycerol phosphate synthase">
    <location>
        <begin position="209"/>
        <end position="367" status="greater than"/>
    </location>
</feature>
<feature type="active site" description="Nucleophile; for GATase activity" evidence="2">
    <location>
        <position position="86"/>
    </location>
</feature>
<feature type="active site" description="For GATase activity" evidence="2">
    <location>
        <position position="175"/>
    </location>
</feature>
<feature type="active site" description="For GATase activity" evidence="2">
    <location>
        <position position="177"/>
    </location>
</feature>
<feature type="binding site" evidence="1">
    <location>
        <begin position="58"/>
        <end position="60"/>
    </location>
    <ligand>
        <name>L-glutamine</name>
        <dbReference type="ChEBI" id="CHEBI:58359"/>
    </ligand>
</feature>
<feature type="binding site" evidence="1">
    <location>
        <position position="90"/>
    </location>
    <ligand>
        <name>L-glutamine</name>
        <dbReference type="ChEBI" id="CHEBI:58359"/>
    </ligand>
</feature>
<feature type="binding site" evidence="1">
    <location>
        <begin position="136"/>
        <end position="137"/>
    </location>
    <ligand>
        <name>L-glutamine</name>
        <dbReference type="ChEBI" id="CHEBI:58359"/>
    </ligand>
</feature>
<feature type="non-terminal residue">
    <location>
        <position position="367"/>
    </location>
</feature>
<sequence length="367" mass="40899">MPAASKNVVMIDNYDSFTWNLYEYLCQEGANVEVFRNDQITIPEIEQLKPDVVVISPGPGHPRTDSGISRDVISHFKGKIPVFGVCMGQQCIFEEFGGDVEYAGEIVHGKTSTVKHDNKGMFKNVPQDVAVTRYHSLAGTLKSLPDCLEITARTDNGIIMGVRHKKYTIEGVQFHPESILTEEGHLMIQNILNVSGGYWEENANGAAQRKESILEKIYAQRRKDYEFEMNRPGRRFADLELYLSMGLAPPLINFYDRLEQNISAGKVAILSEIKRASPSKGVIDGDANAAKQALNYAKAGVATISVLTEPTWFKGNIQDLEVARKAIDSVANRPCILRKEFIFNKYQILEARLAGADTVLLIVKMLS</sequence>
<comment type="catalytic activity">
    <reaction>
        <text>chorismate + L-glutamine = anthranilate + pyruvate + L-glutamate + H(+)</text>
        <dbReference type="Rhea" id="RHEA:21732"/>
        <dbReference type="ChEBI" id="CHEBI:15361"/>
        <dbReference type="ChEBI" id="CHEBI:15378"/>
        <dbReference type="ChEBI" id="CHEBI:16567"/>
        <dbReference type="ChEBI" id="CHEBI:29748"/>
        <dbReference type="ChEBI" id="CHEBI:29985"/>
        <dbReference type="ChEBI" id="CHEBI:58359"/>
        <dbReference type="EC" id="4.1.3.27"/>
    </reaction>
</comment>
<comment type="catalytic activity">
    <reaction>
        <text>1-(2-carboxyphenylamino)-1-deoxy-D-ribulose 5-phosphate + H(+) = (1S,2R)-1-C-(indol-3-yl)glycerol 3-phosphate + CO2 + H2O</text>
        <dbReference type="Rhea" id="RHEA:23476"/>
        <dbReference type="ChEBI" id="CHEBI:15377"/>
        <dbReference type="ChEBI" id="CHEBI:15378"/>
        <dbReference type="ChEBI" id="CHEBI:16526"/>
        <dbReference type="ChEBI" id="CHEBI:58613"/>
        <dbReference type="ChEBI" id="CHEBI:58866"/>
        <dbReference type="EC" id="4.1.1.48"/>
    </reaction>
</comment>
<comment type="pathway">
    <text>Amino-acid biosynthesis; L-tryptophan biosynthesis; L-tryptophan from chorismate: step 1/5.</text>
</comment>
<comment type="pathway">
    <text>Amino-acid biosynthesis; L-tryptophan biosynthesis; L-tryptophan from chorismate: step 4/5.</text>
</comment>
<comment type="subunit">
    <text>Tetramer of two components I and two components II.</text>
</comment>
<comment type="miscellaneous">
    <text>Component I catalyzes the formation of anthranilate using ammonia rather than glutamine, whereas component II provides glutamine amidotransferase activity.</text>
</comment>